<dbReference type="EMBL" id="BX248583">
    <property type="protein sequence ID" value="CAD83419.1"/>
    <property type="molecule type" value="Genomic_DNA"/>
</dbReference>
<dbReference type="SMR" id="Q7VR70"/>
<dbReference type="STRING" id="203907.Bfl352"/>
<dbReference type="KEGG" id="bfl:Bfl352"/>
<dbReference type="eggNOG" id="COG0290">
    <property type="taxonomic scope" value="Bacteria"/>
</dbReference>
<dbReference type="HOGENOM" id="CLU_054919_3_2_6"/>
<dbReference type="Proteomes" id="UP000002192">
    <property type="component" value="Chromosome"/>
</dbReference>
<dbReference type="GO" id="GO:0005829">
    <property type="term" value="C:cytosol"/>
    <property type="evidence" value="ECO:0007669"/>
    <property type="project" value="TreeGrafter"/>
</dbReference>
<dbReference type="GO" id="GO:0016020">
    <property type="term" value="C:membrane"/>
    <property type="evidence" value="ECO:0007669"/>
    <property type="project" value="TreeGrafter"/>
</dbReference>
<dbReference type="GO" id="GO:0043022">
    <property type="term" value="F:ribosome binding"/>
    <property type="evidence" value="ECO:0007669"/>
    <property type="project" value="TreeGrafter"/>
</dbReference>
<dbReference type="GO" id="GO:0003743">
    <property type="term" value="F:translation initiation factor activity"/>
    <property type="evidence" value="ECO:0007669"/>
    <property type="project" value="UniProtKB-UniRule"/>
</dbReference>
<dbReference type="GO" id="GO:0032790">
    <property type="term" value="P:ribosome disassembly"/>
    <property type="evidence" value="ECO:0007669"/>
    <property type="project" value="TreeGrafter"/>
</dbReference>
<dbReference type="FunFam" id="3.10.20.80:FF:000001">
    <property type="entry name" value="Translation initiation factor IF-3"/>
    <property type="match status" value="1"/>
</dbReference>
<dbReference type="FunFam" id="3.30.110.10:FF:000001">
    <property type="entry name" value="Translation initiation factor IF-3"/>
    <property type="match status" value="1"/>
</dbReference>
<dbReference type="Gene3D" id="3.30.110.10">
    <property type="entry name" value="Translation initiation factor 3 (IF-3), C-terminal domain"/>
    <property type="match status" value="1"/>
</dbReference>
<dbReference type="Gene3D" id="3.10.20.80">
    <property type="entry name" value="Translation initiation factor 3 (IF-3), N-terminal domain"/>
    <property type="match status" value="1"/>
</dbReference>
<dbReference type="HAMAP" id="MF_00080">
    <property type="entry name" value="IF_3"/>
    <property type="match status" value="1"/>
</dbReference>
<dbReference type="InterPro" id="IPR036788">
    <property type="entry name" value="T_IF-3_C_sf"/>
</dbReference>
<dbReference type="InterPro" id="IPR036787">
    <property type="entry name" value="T_IF-3_N_sf"/>
</dbReference>
<dbReference type="InterPro" id="IPR019813">
    <property type="entry name" value="Translation_initiation_fac3_CS"/>
</dbReference>
<dbReference type="InterPro" id="IPR001288">
    <property type="entry name" value="Translation_initiation_fac_3"/>
</dbReference>
<dbReference type="InterPro" id="IPR019815">
    <property type="entry name" value="Translation_initiation_fac_3_C"/>
</dbReference>
<dbReference type="InterPro" id="IPR019814">
    <property type="entry name" value="Translation_initiation_fac_3_N"/>
</dbReference>
<dbReference type="NCBIfam" id="TIGR00168">
    <property type="entry name" value="infC"/>
    <property type="match status" value="1"/>
</dbReference>
<dbReference type="PANTHER" id="PTHR10938">
    <property type="entry name" value="TRANSLATION INITIATION FACTOR IF-3"/>
    <property type="match status" value="1"/>
</dbReference>
<dbReference type="PANTHER" id="PTHR10938:SF0">
    <property type="entry name" value="TRANSLATION INITIATION FACTOR IF-3, MITOCHONDRIAL"/>
    <property type="match status" value="1"/>
</dbReference>
<dbReference type="Pfam" id="PF00707">
    <property type="entry name" value="IF3_C"/>
    <property type="match status" value="1"/>
</dbReference>
<dbReference type="Pfam" id="PF05198">
    <property type="entry name" value="IF3_N"/>
    <property type="match status" value="1"/>
</dbReference>
<dbReference type="SUPFAM" id="SSF55200">
    <property type="entry name" value="Translation initiation factor IF3, C-terminal domain"/>
    <property type="match status" value="1"/>
</dbReference>
<dbReference type="SUPFAM" id="SSF54364">
    <property type="entry name" value="Translation initiation factor IF3, N-terminal domain"/>
    <property type="match status" value="1"/>
</dbReference>
<dbReference type="PROSITE" id="PS00938">
    <property type="entry name" value="IF3"/>
    <property type="match status" value="1"/>
</dbReference>
<organism>
    <name type="scientific">Blochmanniella floridana</name>
    <dbReference type="NCBI Taxonomy" id="203907"/>
    <lineage>
        <taxon>Bacteria</taxon>
        <taxon>Pseudomonadati</taxon>
        <taxon>Pseudomonadota</taxon>
        <taxon>Gammaproteobacteria</taxon>
        <taxon>Enterobacterales</taxon>
        <taxon>Enterobacteriaceae</taxon>
        <taxon>ant endosymbionts</taxon>
        <taxon>Candidatus Blochmanniella</taxon>
    </lineage>
</organism>
<proteinExistence type="inferred from homology"/>
<gene>
    <name evidence="1" type="primary">infC</name>
    <name type="ordered locus">Bfl352</name>
</gene>
<protein>
    <recommendedName>
        <fullName evidence="1">Translation initiation factor IF-3</fullName>
    </recommendedName>
</protein>
<accession>Q7VR70</accession>
<comment type="function">
    <text evidence="1">IF-3 binds to the 30S ribosomal subunit and shifts the equilibrium between 70S ribosomes and their 50S and 30S subunits in favor of the free subunits, thus enhancing the availability of 30S subunits on which protein synthesis initiation begins.</text>
</comment>
<comment type="subunit">
    <text evidence="1">Monomer.</text>
</comment>
<comment type="subcellular location">
    <subcellularLocation>
        <location evidence="1">Cytoplasm</location>
    </subcellularLocation>
</comment>
<comment type="similarity">
    <text evidence="1">Belongs to the IF-3 family.</text>
</comment>
<sequence>MQSFRLHRINREITIKKIRLTGADGKQIGVVNFNEAIKQAEDLELDLVEISPNSDPPVCKIMNYGKFLYEKNKSTKEQKKKQKIIHIKEIKFRPGTDEGDYQVKLRNIIKFLNDGYKIKITLRFRGGELIHQQIGVRVLHRISQDLHDLMTVEIFPNKVEGRQMTMILAPKKKPV</sequence>
<name>IF3_BLOFL</name>
<keyword id="KW-0963">Cytoplasm</keyword>
<keyword id="KW-0396">Initiation factor</keyword>
<keyword id="KW-0648">Protein biosynthesis</keyword>
<keyword id="KW-1185">Reference proteome</keyword>
<evidence type="ECO:0000255" key="1">
    <source>
        <dbReference type="HAMAP-Rule" id="MF_00080"/>
    </source>
</evidence>
<feature type="chain" id="PRO_0000177500" description="Translation initiation factor IF-3">
    <location>
        <begin position="1"/>
        <end position="175"/>
    </location>
</feature>
<reference key="1">
    <citation type="journal article" date="2003" name="Proc. Natl. Acad. Sci. U.S.A.">
        <title>The genome sequence of Blochmannia floridanus: comparative analysis of reduced genomes.</title>
        <authorList>
            <person name="Gil R."/>
            <person name="Silva F.J."/>
            <person name="Zientz E."/>
            <person name="Delmotte F."/>
            <person name="Gonzalez-Candelas F."/>
            <person name="Latorre A."/>
            <person name="Rausell C."/>
            <person name="Kamerbeek J."/>
            <person name="Gadau J."/>
            <person name="Hoelldobler B."/>
            <person name="van Ham R.C.H.J."/>
            <person name="Gross R."/>
            <person name="Moya A."/>
        </authorList>
    </citation>
    <scope>NUCLEOTIDE SEQUENCE [LARGE SCALE GENOMIC DNA]</scope>
</reference>